<comment type="function">
    <text evidence="2">Produces ATP from ADP in the presence of a proton gradient across the membrane.</text>
</comment>
<comment type="subunit">
    <text evidence="2">F-type ATPases have 2 components, CF(1) - the catalytic core - and CF(0) - the membrane proton channel. CF(1) has five subunits: alpha(3), beta(3), gamma(1), delta(1), epsilon(1). CF(0) has three main subunits: a, b and c.</text>
</comment>
<comment type="subcellular location">
    <subcellularLocation>
        <location evidence="1">Plastid membrane</location>
        <topology evidence="2">Peripheral membrane protein</topology>
    </subcellularLocation>
</comment>
<comment type="similarity">
    <text evidence="2">Belongs to the ATPase epsilon chain family.</text>
</comment>
<proteinExistence type="inferred from homology"/>
<accession>Q9TJR8</accession>
<organism>
    <name type="scientific">Prototheca wickerhamii</name>
    <dbReference type="NCBI Taxonomy" id="3111"/>
    <lineage>
        <taxon>Eukaryota</taxon>
        <taxon>Viridiplantae</taxon>
        <taxon>Chlorophyta</taxon>
        <taxon>core chlorophytes</taxon>
        <taxon>Trebouxiophyceae</taxon>
        <taxon>Chlorellales</taxon>
        <taxon>Chlorellaceae</taxon>
        <taxon>Prototheca</taxon>
    </lineage>
</organism>
<name>ATPE_PROWI</name>
<gene>
    <name evidence="2" type="primary">atpE</name>
</gene>
<feature type="chain" id="PRO_0000188289" description="ATP synthase epsilon chain, plastid">
    <location>
        <begin position="1"/>
        <end position="134"/>
    </location>
</feature>
<sequence length="134" mass="14810">MILKILIMIPDGIFWNNKAEEIILPTNTGQIGILKNHAPLITALDIGVILIRTDKKWVPFIIMGGFALIKQNKITILVNGAESAGTLKLVQSEAAFQEATNKLENAKSKKQYVDALFLFKCAKARYQAAKQLVS</sequence>
<protein>
    <recommendedName>
        <fullName evidence="2">ATP synthase epsilon chain, plastid</fullName>
    </recommendedName>
    <alternativeName>
        <fullName evidence="2">ATP synthase F1 sector epsilon subunit</fullName>
    </alternativeName>
    <alternativeName>
        <fullName evidence="2">F-ATPase epsilon subunit</fullName>
    </alternativeName>
</protein>
<reference key="1">
    <citation type="journal article" date="2002" name="Mol. Genet. Genomics">
        <title>The genes encoding subunits of ATP synthase are conserved in the reduced plastid genome of the heterotrophic alga Prototheca wickerhamii.</title>
        <authorList>
            <person name="Knauf U."/>
            <person name="Hachtel W."/>
        </authorList>
    </citation>
    <scope>NUCLEOTIDE SEQUENCE [GENOMIC DNA]</scope>
    <source>
        <strain>263-11</strain>
    </source>
</reference>
<dbReference type="EMBL" id="AJ245645">
    <property type="protein sequence ID" value="CAB53103.1"/>
    <property type="molecule type" value="Genomic_DNA"/>
</dbReference>
<dbReference type="SMR" id="Q9TJR8"/>
<dbReference type="GO" id="GO:0042170">
    <property type="term" value="C:plastid membrane"/>
    <property type="evidence" value="ECO:0007669"/>
    <property type="project" value="UniProtKB-SubCell"/>
</dbReference>
<dbReference type="GO" id="GO:0045259">
    <property type="term" value="C:proton-transporting ATP synthase complex"/>
    <property type="evidence" value="ECO:0007669"/>
    <property type="project" value="UniProtKB-KW"/>
</dbReference>
<dbReference type="GO" id="GO:0046933">
    <property type="term" value="F:proton-transporting ATP synthase activity, rotational mechanism"/>
    <property type="evidence" value="ECO:0007669"/>
    <property type="project" value="InterPro"/>
</dbReference>
<dbReference type="CDD" id="cd12152">
    <property type="entry name" value="F1-ATPase_delta"/>
    <property type="match status" value="1"/>
</dbReference>
<dbReference type="Gene3D" id="2.60.15.10">
    <property type="entry name" value="F0F1 ATP synthase delta/epsilon subunit, N-terminal"/>
    <property type="match status" value="1"/>
</dbReference>
<dbReference type="HAMAP" id="MF_00530">
    <property type="entry name" value="ATP_synth_epsil_bac"/>
    <property type="match status" value="1"/>
</dbReference>
<dbReference type="InterPro" id="IPR001469">
    <property type="entry name" value="ATP_synth_F1_dsu/esu"/>
</dbReference>
<dbReference type="InterPro" id="IPR020546">
    <property type="entry name" value="ATP_synth_F1_dsu/esu_N"/>
</dbReference>
<dbReference type="InterPro" id="IPR036771">
    <property type="entry name" value="ATPsynth_dsu/esu_N"/>
</dbReference>
<dbReference type="NCBIfam" id="TIGR01216">
    <property type="entry name" value="ATP_synt_epsi"/>
    <property type="match status" value="1"/>
</dbReference>
<dbReference type="PANTHER" id="PTHR13822">
    <property type="entry name" value="ATP SYNTHASE DELTA/EPSILON CHAIN"/>
    <property type="match status" value="1"/>
</dbReference>
<dbReference type="PANTHER" id="PTHR13822:SF10">
    <property type="entry name" value="ATP SYNTHASE EPSILON CHAIN, CHLOROPLASTIC"/>
    <property type="match status" value="1"/>
</dbReference>
<dbReference type="Pfam" id="PF02823">
    <property type="entry name" value="ATP-synt_DE_N"/>
    <property type="match status" value="1"/>
</dbReference>
<dbReference type="SUPFAM" id="SSF51344">
    <property type="entry name" value="Epsilon subunit of F1F0-ATP synthase N-terminal domain"/>
    <property type="match status" value="1"/>
</dbReference>
<evidence type="ECO:0000250" key="1"/>
<evidence type="ECO:0000255" key="2">
    <source>
        <dbReference type="HAMAP-Rule" id="MF_00530"/>
    </source>
</evidence>
<geneLocation type="non-photosynthetic plastid"/>
<keyword id="KW-0066">ATP synthesis</keyword>
<keyword id="KW-0139">CF(1)</keyword>
<keyword id="KW-0375">Hydrogen ion transport</keyword>
<keyword id="KW-0406">Ion transport</keyword>
<keyword id="KW-0472">Membrane</keyword>
<keyword id="KW-0934">Plastid</keyword>
<keyword id="KW-0813">Transport</keyword>